<protein>
    <recommendedName>
        <fullName evidence="4">Binding partner of ACD11 1</fullName>
    </recommendedName>
</protein>
<reference key="1">
    <citation type="journal article" date="2000" name="Nature">
        <title>Sequence and analysis of chromosome 5 of the plant Arabidopsis thaliana.</title>
        <authorList>
            <person name="Tabata S."/>
            <person name="Kaneko T."/>
            <person name="Nakamura Y."/>
            <person name="Kotani H."/>
            <person name="Kato T."/>
            <person name="Asamizu E."/>
            <person name="Miyajima N."/>
            <person name="Sasamoto S."/>
            <person name="Kimura T."/>
            <person name="Hosouchi T."/>
            <person name="Kawashima K."/>
            <person name="Kohara M."/>
            <person name="Matsumoto M."/>
            <person name="Matsuno A."/>
            <person name="Muraki A."/>
            <person name="Nakayama S."/>
            <person name="Nakazaki N."/>
            <person name="Naruo K."/>
            <person name="Okumura S."/>
            <person name="Shinpo S."/>
            <person name="Takeuchi C."/>
            <person name="Wada T."/>
            <person name="Watanabe A."/>
            <person name="Yamada M."/>
            <person name="Yasuda M."/>
            <person name="Sato S."/>
            <person name="de la Bastide M."/>
            <person name="Huang E."/>
            <person name="Spiegel L."/>
            <person name="Gnoj L."/>
            <person name="O'Shaughnessy A."/>
            <person name="Preston R."/>
            <person name="Habermann K."/>
            <person name="Murray J."/>
            <person name="Johnson D."/>
            <person name="Rohlfing T."/>
            <person name="Nelson J."/>
            <person name="Stoneking T."/>
            <person name="Pepin K."/>
            <person name="Spieth J."/>
            <person name="Sekhon M."/>
            <person name="Armstrong J."/>
            <person name="Becker M."/>
            <person name="Belter E."/>
            <person name="Cordum H."/>
            <person name="Cordes M."/>
            <person name="Courtney L."/>
            <person name="Courtney W."/>
            <person name="Dante M."/>
            <person name="Du H."/>
            <person name="Edwards J."/>
            <person name="Fryman J."/>
            <person name="Haakensen B."/>
            <person name="Lamar E."/>
            <person name="Latreille P."/>
            <person name="Leonard S."/>
            <person name="Meyer R."/>
            <person name="Mulvaney E."/>
            <person name="Ozersky P."/>
            <person name="Riley A."/>
            <person name="Strowmatt C."/>
            <person name="Wagner-McPherson C."/>
            <person name="Wollam A."/>
            <person name="Yoakum M."/>
            <person name="Bell M."/>
            <person name="Dedhia N."/>
            <person name="Parnell L."/>
            <person name="Shah R."/>
            <person name="Rodriguez M."/>
            <person name="Hoon See L."/>
            <person name="Vil D."/>
            <person name="Baker J."/>
            <person name="Kirchoff K."/>
            <person name="Toth K."/>
            <person name="King L."/>
            <person name="Bahret A."/>
            <person name="Miller B."/>
            <person name="Marra M.A."/>
            <person name="Martienssen R."/>
            <person name="McCombie W.R."/>
            <person name="Wilson R.K."/>
            <person name="Murphy G."/>
            <person name="Bancroft I."/>
            <person name="Volckaert G."/>
            <person name="Wambutt R."/>
            <person name="Duesterhoeft A."/>
            <person name="Stiekema W."/>
            <person name="Pohl T."/>
            <person name="Entian K.-D."/>
            <person name="Terryn N."/>
            <person name="Hartley N."/>
            <person name="Bent E."/>
            <person name="Johnson S."/>
            <person name="Langham S.-A."/>
            <person name="McCullagh B."/>
            <person name="Robben J."/>
            <person name="Grymonprez B."/>
            <person name="Zimmermann W."/>
            <person name="Ramsperger U."/>
            <person name="Wedler H."/>
            <person name="Balke K."/>
            <person name="Wedler E."/>
            <person name="Peters S."/>
            <person name="van Staveren M."/>
            <person name="Dirkse W."/>
            <person name="Mooijman P."/>
            <person name="Klein Lankhorst R."/>
            <person name="Weitzenegger T."/>
            <person name="Bothe G."/>
            <person name="Rose M."/>
            <person name="Hauf J."/>
            <person name="Berneiser S."/>
            <person name="Hempel S."/>
            <person name="Feldpausch M."/>
            <person name="Lamberth S."/>
            <person name="Villarroel R."/>
            <person name="Gielen J."/>
            <person name="Ardiles W."/>
            <person name="Bents O."/>
            <person name="Lemcke K."/>
            <person name="Kolesov G."/>
            <person name="Mayer K.F.X."/>
            <person name="Rudd S."/>
            <person name="Schoof H."/>
            <person name="Schueller C."/>
            <person name="Zaccaria P."/>
            <person name="Mewes H.-W."/>
            <person name="Bevan M."/>
            <person name="Fransz P.F."/>
        </authorList>
    </citation>
    <scope>NUCLEOTIDE SEQUENCE [LARGE SCALE GENOMIC DNA]</scope>
    <source>
        <strain>cv. Columbia</strain>
    </source>
</reference>
<reference key="2">
    <citation type="journal article" date="2017" name="Plant J.">
        <title>Araport11: a complete reannotation of the Arabidopsis thaliana reference genome.</title>
        <authorList>
            <person name="Cheng C.Y."/>
            <person name="Krishnakumar V."/>
            <person name="Chan A.P."/>
            <person name="Thibaud-Nissen F."/>
            <person name="Schobel S."/>
            <person name="Town C.D."/>
        </authorList>
    </citation>
    <scope>GENOME REANNOTATION</scope>
    <source>
        <strain>cv. Columbia</strain>
    </source>
</reference>
<reference key="3">
    <citation type="journal article" date="2003" name="Science">
        <title>Empirical analysis of transcriptional activity in the Arabidopsis genome.</title>
        <authorList>
            <person name="Yamada K."/>
            <person name="Lim J."/>
            <person name="Dale J.M."/>
            <person name="Chen H."/>
            <person name="Shinn P."/>
            <person name="Palm C.J."/>
            <person name="Southwick A.M."/>
            <person name="Wu H.C."/>
            <person name="Kim C.J."/>
            <person name="Nguyen M."/>
            <person name="Pham P.K."/>
            <person name="Cheuk R.F."/>
            <person name="Karlin-Newmann G."/>
            <person name="Liu S.X."/>
            <person name="Lam B."/>
            <person name="Sakano H."/>
            <person name="Wu T."/>
            <person name="Yu G."/>
            <person name="Miranda M."/>
            <person name="Quach H.L."/>
            <person name="Tripp M."/>
            <person name="Chang C.H."/>
            <person name="Lee J.M."/>
            <person name="Toriumi M.J."/>
            <person name="Chan M.M."/>
            <person name="Tang C.C."/>
            <person name="Onodera C.S."/>
            <person name="Deng J.M."/>
            <person name="Akiyama K."/>
            <person name="Ansari Y."/>
            <person name="Arakawa T."/>
            <person name="Banh J."/>
            <person name="Banno F."/>
            <person name="Bowser L."/>
            <person name="Brooks S.Y."/>
            <person name="Carninci P."/>
            <person name="Chao Q."/>
            <person name="Choy N."/>
            <person name="Enju A."/>
            <person name="Goldsmith A.D."/>
            <person name="Gurjal M."/>
            <person name="Hansen N.F."/>
            <person name="Hayashizaki Y."/>
            <person name="Johnson-Hopson C."/>
            <person name="Hsuan V.W."/>
            <person name="Iida K."/>
            <person name="Karnes M."/>
            <person name="Khan S."/>
            <person name="Koesema E."/>
            <person name="Ishida J."/>
            <person name="Jiang P.X."/>
            <person name="Jones T."/>
            <person name="Kawai J."/>
            <person name="Kamiya A."/>
            <person name="Meyers C."/>
            <person name="Nakajima M."/>
            <person name="Narusaka M."/>
            <person name="Seki M."/>
            <person name="Sakurai T."/>
            <person name="Satou M."/>
            <person name="Tamse R."/>
            <person name="Vaysberg M."/>
            <person name="Wallender E.K."/>
            <person name="Wong C."/>
            <person name="Yamamura Y."/>
            <person name="Yuan S."/>
            <person name="Shinozaki K."/>
            <person name="Davis R.W."/>
            <person name="Theologis A."/>
            <person name="Ecker J.R."/>
        </authorList>
    </citation>
    <scope>NUCLEOTIDE SEQUENCE [LARGE SCALE MRNA] (ISOFORM 1)</scope>
    <source>
        <strain>cv. Columbia</strain>
    </source>
</reference>
<reference key="4">
    <citation type="journal article" date="2009" name="DNA Res.">
        <title>Analysis of multiple occurrences of alternative splicing events in Arabidopsis thaliana using novel sequenced full-length cDNAs.</title>
        <authorList>
            <person name="Iida K."/>
            <person name="Fukami-Kobayashi K."/>
            <person name="Toyoda A."/>
            <person name="Sakaki Y."/>
            <person name="Kobayashi M."/>
            <person name="Seki M."/>
            <person name="Shinozaki K."/>
        </authorList>
    </citation>
    <scope>NUCLEOTIDE SEQUENCE [LARGE SCALE MRNA] (ISOFORM 4)</scope>
    <source>
        <strain>cv. Columbia</strain>
    </source>
</reference>
<reference key="5">
    <citation type="journal article" date="2009" name="J. Plant Physiol.">
        <title>Identification of proteins interacting with Arabidopsis ACD11.</title>
        <authorList>
            <person name="Petersen N.H."/>
            <person name="Joensen J."/>
            <person name="McKinney L.V."/>
            <person name="Brodersen P."/>
            <person name="Petersen M."/>
            <person name="Hofius D."/>
            <person name="Mundy J."/>
        </authorList>
    </citation>
    <scope>INTERACTION WITH ACD11; PR1F2 AND PR1F3</scope>
    <scope>SUBCELLULAR LOCATION</scope>
    <scope>DISRUPTION PHENOTYPE</scope>
</reference>
<dbReference type="EMBL" id="AL391147">
    <property type="protein sequence ID" value="CAC01848.1"/>
    <property type="molecule type" value="Genomic_DNA"/>
</dbReference>
<dbReference type="EMBL" id="CP002688">
    <property type="protein sequence ID" value="AED92346.1"/>
    <property type="molecule type" value="Genomic_DNA"/>
</dbReference>
<dbReference type="EMBL" id="CP002688">
    <property type="protein sequence ID" value="AED92347.1"/>
    <property type="molecule type" value="Genomic_DNA"/>
</dbReference>
<dbReference type="EMBL" id="CP002688">
    <property type="protein sequence ID" value="AED92348.1"/>
    <property type="molecule type" value="Genomic_DNA"/>
</dbReference>
<dbReference type="EMBL" id="AY058146">
    <property type="protein sequence ID" value="AAL25562.1"/>
    <property type="molecule type" value="mRNA"/>
</dbReference>
<dbReference type="EMBL" id="AY094058">
    <property type="protein sequence ID" value="AAM16214.1"/>
    <property type="molecule type" value="mRNA"/>
</dbReference>
<dbReference type="EMBL" id="AK318634">
    <property type="protein sequence ID" value="BAH56749.1"/>
    <property type="molecule type" value="mRNA"/>
</dbReference>
<dbReference type="PIR" id="T51516">
    <property type="entry name" value="T51516"/>
</dbReference>
<dbReference type="RefSeq" id="NP_001078595.1">
    <molecule id="Q9LFD5-2"/>
    <property type="nucleotide sequence ID" value="NM_001085126.1"/>
</dbReference>
<dbReference type="RefSeq" id="NP_001078596.1">
    <molecule id="Q9LFD5-3"/>
    <property type="nucleotide sequence ID" value="NM_001085127.1"/>
</dbReference>
<dbReference type="RefSeq" id="NP_197186.1">
    <molecule id="Q9LFD5-1"/>
    <property type="nucleotide sequence ID" value="NM_121690.4"/>
</dbReference>
<dbReference type="SMR" id="Q9LFD5"/>
<dbReference type="FunCoup" id="Q9LFD5">
    <property type="interactions" value="1513"/>
</dbReference>
<dbReference type="IntAct" id="Q9LFD5">
    <property type="interactions" value="7"/>
</dbReference>
<dbReference type="STRING" id="3702.Q9LFD5"/>
<dbReference type="GlyGen" id="Q9LFD5">
    <property type="glycosylation" value="2 sites, 1 O-linked glycan (2 sites)"/>
</dbReference>
<dbReference type="iPTMnet" id="Q9LFD5"/>
<dbReference type="PaxDb" id="3702-AT5G16840.2"/>
<dbReference type="ProteomicsDB" id="240804">
    <molecule id="Q9LFD5-1"/>
</dbReference>
<dbReference type="EnsemblPlants" id="AT5G16840.1">
    <molecule id="Q9LFD5-1"/>
    <property type="protein sequence ID" value="AT5G16840.1"/>
    <property type="gene ID" value="AT5G16840"/>
</dbReference>
<dbReference type="EnsemblPlants" id="AT5G16840.2">
    <molecule id="Q9LFD5-2"/>
    <property type="protein sequence ID" value="AT5G16840.2"/>
    <property type="gene ID" value="AT5G16840"/>
</dbReference>
<dbReference type="EnsemblPlants" id="AT5G16840.3">
    <molecule id="Q9LFD5-3"/>
    <property type="protein sequence ID" value="AT5G16840.3"/>
    <property type="gene ID" value="AT5G16840"/>
</dbReference>
<dbReference type="GeneID" id="831547"/>
<dbReference type="Gramene" id="AT5G16840.1">
    <molecule id="Q9LFD5-1"/>
    <property type="protein sequence ID" value="AT5G16840.1"/>
    <property type="gene ID" value="AT5G16840"/>
</dbReference>
<dbReference type="Gramene" id="AT5G16840.2">
    <molecule id="Q9LFD5-2"/>
    <property type="protein sequence ID" value="AT5G16840.2"/>
    <property type="gene ID" value="AT5G16840"/>
</dbReference>
<dbReference type="Gramene" id="AT5G16840.3">
    <molecule id="Q9LFD5-3"/>
    <property type="protein sequence ID" value="AT5G16840.3"/>
    <property type="gene ID" value="AT5G16840"/>
</dbReference>
<dbReference type="KEGG" id="ath:AT5G16840"/>
<dbReference type="Araport" id="AT5G16840"/>
<dbReference type="TAIR" id="AT5G16840">
    <property type="gene designation" value="BPA1"/>
</dbReference>
<dbReference type="eggNOG" id="ENOG502S19D">
    <property type="taxonomic scope" value="Eukaryota"/>
</dbReference>
<dbReference type="InParanoid" id="Q9LFD5"/>
<dbReference type="OMA" id="NQYRSAF"/>
<dbReference type="OrthoDB" id="7763451at2759"/>
<dbReference type="PhylomeDB" id="Q9LFD5"/>
<dbReference type="PRO" id="PR:Q9LFD5"/>
<dbReference type="Proteomes" id="UP000006548">
    <property type="component" value="Chromosome 5"/>
</dbReference>
<dbReference type="ExpressionAtlas" id="Q9LFD5">
    <property type="expression patterns" value="baseline and differential"/>
</dbReference>
<dbReference type="GO" id="GO:0005886">
    <property type="term" value="C:plasma membrane"/>
    <property type="evidence" value="ECO:0000314"/>
    <property type="project" value="TAIR"/>
</dbReference>
<dbReference type="GO" id="GO:0009536">
    <property type="term" value="C:plastid"/>
    <property type="evidence" value="ECO:0007005"/>
    <property type="project" value="TAIR"/>
</dbReference>
<dbReference type="GO" id="GO:0003723">
    <property type="term" value="F:RNA binding"/>
    <property type="evidence" value="ECO:0007669"/>
    <property type="project" value="UniProtKB-KW"/>
</dbReference>
<dbReference type="GO" id="GO:0050832">
    <property type="term" value="P:defense response to fungus"/>
    <property type="evidence" value="ECO:0000315"/>
    <property type="project" value="TAIR"/>
</dbReference>
<dbReference type="GO" id="GO:0034051">
    <property type="term" value="P:negative regulation of plant-type hypersensitive response"/>
    <property type="evidence" value="ECO:0000315"/>
    <property type="project" value="TAIR"/>
</dbReference>
<dbReference type="FunFam" id="3.30.70.330:FF:000820">
    <property type="entry name" value="RNA recognition motif-containing protein"/>
    <property type="match status" value="1"/>
</dbReference>
<dbReference type="Gene3D" id="3.30.70.330">
    <property type="match status" value="1"/>
</dbReference>
<dbReference type="InterPro" id="IPR012677">
    <property type="entry name" value="Nucleotide-bd_a/b_plait_sf"/>
</dbReference>
<dbReference type="InterPro" id="IPR035979">
    <property type="entry name" value="RBD_domain_sf"/>
</dbReference>
<dbReference type="InterPro" id="IPR000504">
    <property type="entry name" value="RRM_dom"/>
</dbReference>
<dbReference type="PANTHER" id="PTHR32343:SF37">
    <property type="entry name" value="BINDING PARTNER OF ACD11 1"/>
    <property type="match status" value="1"/>
</dbReference>
<dbReference type="PANTHER" id="PTHR32343">
    <property type="entry name" value="SERINE/ARGININE-RICH SPLICING FACTOR"/>
    <property type="match status" value="1"/>
</dbReference>
<dbReference type="Pfam" id="PF00076">
    <property type="entry name" value="RRM_1"/>
    <property type="match status" value="1"/>
</dbReference>
<dbReference type="SMART" id="SM00360">
    <property type="entry name" value="RRM"/>
    <property type="match status" value="1"/>
</dbReference>
<dbReference type="SUPFAM" id="SSF54928">
    <property type="entry name" value="RNA-binding domain, RBD"/>
    <property type="match status" value="1"/>
</dbReference>
<dbReference type="PROSITE" id="PS50102">
    <property type="entry name" value="RRM"/>
    <property type="match status" value="1"/>
</dbReference>
<proteinExistence type="evidence at protein level"/>
<organism evidence="9">
    <name type="scientific">Arabidopsis thaliana</name>
    <name type="common">Mouse-ear cress</name>
    <dbReference type="NCBI Taxonomy" id="3702"/>
    <lineage>
        <taxon>Eukaryota</taxon>
        <taxon>Viridiplantae</taxon>
        <taxon>Streptophyta</taxon>
        <taxon>Embryophyta</taxon>
        <taxon>Tracheophyta</taxon>
        <taxon>Spermatophyta</taxon>
        <taxon>Magnoliopsida</taxon>
        <taxon>eudicotyledons</taxon>
        <taxon>Gunneridae</taxon>
        <taxon>Pentapetalae</taxon>
        <taxon>rosids</taxon>
        <taxon>malvids</taxon>
        <taxon>Brassicales</taxon>
        <taxon>Brassicaceae</taxon>
        <taxon>Camelineae</taxon>
        <taxon>Arabidopsis</taxon>
    </lineage>
</organism>
<accession>Q9LFD5</accession>
<accession>A8MQX8</accession>
<accession>A8MSB5</accession>
<accession>C0Z220</accession>
<accession>Q93Z43</accession>
<feature type="chain" id="PRO_0000432647" description="Binding partner of ACD11 1">
    <location>
        <begin position="1"/>
        <end position="259"/>
    </location>
</feature>
<feature type="domain" description="RRM" evidence="1">
    <location>
        <begin position="6"/>
        <end position="77"/>
    </location>
</feature>
<feature type="region of interest" description="Disordered" evidence="2">
    <location>
        <begin position="219"/>
        <end position="259"/>
    </location>
</feature>
<feature type="compositionally biased region" description="Low complexity" evidence="2">
    <location>
        <begin position="232"/>
        <end position="243"/>
    </location>
</feature>
<feature type="splice variant" id="VSP_057555" description="In isoform 4.">
    <location>
        <begin position="1"/>
        <end position="106"/>
    </location>
</feature>
<feature type="splice variant" id="VSP_057556" description="In isoform 3.">
    <original>MASQ</original>
    <variation>MA</variation>
    <location>
        <begin position="1"/>
        <end position="4"/>
    </location>
</feature>
<feature type="splice variant" id="VSP_057557" description="In isoform 2.">
    <original>Q</original>
    <variation>QS</variation>
    <location>
        <position position="38"/>
    </location>
</feature>
<feature type="sequence conflict" description="In Ref. 3; AAL25562/AAM16214." evidence="5" ref="3">
    <original>A</original>
    <variation>P</variation>
    <location>
        <position position="63"/>
    </location>
</feature>
<keyword id="KW-0025">Alternative splicing</keyword>
<keyword id="KW-0963">Cytoplasm</keyword>
<keyword id="KW-0472">Membrane</keyword>
<keyword id="KW-1185">Reference proteome</keyword>
<keyword id="KW-0694">RNA-binding</keyword>
<sequence length="259" mass="27234">MASQVRSVKVGNLSSGATEHDIKEFFSFSGEVESIDIQSNEHSAYVTFKETQGAETAVLLSGASIADQSVIIELAPNYSPPAAPHAETQSSGAESVVQKAEDVVSSMLAKGFILGKDAVGKAKAFDEKHGFTSTATAGVASLDQKIGLSQKLTAGTSLVNEKIKAVDQNFQVTERTKSVYAAAEQTVSSAGSAVMKNRYVLTGVSWAAGAFNRVAQAAGEVGQKTKEKVEAEQPSQPAQSQQQLPEGYSPIHSSEYSKN</sequence>
<comment type="subunit">
    <text evidence="3">Interacts with ACD11, PR1F2 and PR1F3 (PubMed:18845362).</text>
</comment>
<comment type="interaction">
    <interactant intactId="EBI-2010933">
        <id>Q9LFD5</id>
    </interactant>
    <interactant intactId="EBI-2010923">
        <id>O64587</id>
        <label>ACD11</label>
    </interactant>
    <organismsDiffer>false</organismsDiffer>
    <experiments>4</experiments>
</comment>
<comment type="subcellular location">
    <subcellularLocation>
        <location evidence="3">Cytoplasm</location>
    </subcellularLocation>
    <subcellularLocation>
        <location evidence="3">Membrane</location>
    </subcellularLocation>
</comment>
<comment type="alternative products">
    <event type="alternative splicing"/>
    <isoform>
        <id>Q9LFD5-1</id>
        <name>1</name>
        <sequence type="displayed"/>
    </isoform>
    <isoform>
        <id>Q9LFD5-2</id>
        <name>2</name>
        <sequence type="described" ref="VSP_057557"/>
    </isoform>
    <isoform>
        <id>Q9LFD5-3</id>
        <name>3</name>
        <sequence type="described" ref="VSP_057556"/>
    </isoform>
    <isoform>
        <id>Q9LFD5-4</id>
        <name>4</name>
        <sequence type="described" ref="VSP_057555"/>
    </isoform>
</comment>
<comment type="disruption phenotype">
    <text evidence="6">No visible phenotype.</text>
</comment>
<gene>
    <name type="primary">BPA1</name>
    <name evidence="7" type="ordered locus">At5g16840</name>
    <name evidence="8" type="ORF">F5E19.180</name>
</gene>
<evidence type="ECO:0000255" key="1">
    <source>
        <dbReference type="PROSITE-ProRule" id="PRU00176"/>
    </source>
</evidence>
<evidence type="ECO:0000256" key="2">
    <source>
        <dbReference type="SAM" id="MobiDB-lite"/>
    </source>
</evidence>
<evidence type="ECO:0000269" key="3">
    <source>
    </source>
</evidence>
<evidence type="ECO:0000303" key="4">
    <source>
    </source>
</evidence>
<evidence type="ECO:0000305" key="5"/>
<evidence type="ECO:0000305" key="6">
    <source>
    </source>
</evidence>
<evidence type="ECO:0000312" key="7">
    <source>
        <dbReference type="Araport" id="AT5G16840"/>
    </source>
</evidence>
<evidence type="ECO:0000312" key="8">
    <source>
        <dbReference type="EMBL" id="CAC01848.1"/>
    </source>
</evidence>
<evidence type="ECO:0000312" key="9">
    <source>
        <dbReference type="Proteomes" id="UP000006548"/>
    </source>
</evidence>
<name>BPA1_ARATH</name>